<gene>
    <name evidence="1" type="primary">SEPTIN4</name>
    <name type="synonym">SEPT4</name>
</gene>
<sequence>MDRSLGWQGNSVPEDRTEAGIKRFLEDTTDDGELSKFVKDFSGNESCHPPEAKTWASRPQVPEPRPQAPDLYDDDLEFRPPSWPQSSDNQQYFCAPAPLSPSARPRSPWGKLDPYDSSEDDKEYVGFATLPNQVHRKSVKKGFDFTLMVAGESGLGKSTLVNSLFLTDLYRDRKLLGAEERIMQTVEITKHAVDIEEKGVRLRLTIVDTPGFGDAVNNTECWKPVAEYIDQQFEQYFRDESGLNRKNIQDNRVHCCLYFISPFGHGLRPLDVEFMKALHQRVNIVPILAKADTLTPPEVDRKKRKIREEIEHFGIKIYQFPDCDSDEDEDFKLQDQALKESIPFAVIGSNTVVEARGRRVRGRLYPWGIVEVENPGHCDFVKLRTMLVRTHMQDLKDVTRETHYENYRAQCIQSMTRLVVKERNRNKLTRESGTDLPIPAVPPGTDPETEKLIREKDEELRRMQEMLHKIQKQMKETY</sequence>
<keyword id="KW-0131">Cell cycle</keyword>
<keyword id="KW-0132">Cell division</keyword>
<keyword id="KW-0966">Cell projection</keyword>
<keyword id="KW-0969">Cilium</keyword>
<keyword id="KW-0175">Coiled coil</keyword>
<keyword id="KW-0963">Cytoplasm</keyword>
<keyword id="KW-0968">Cytoplasmic vesicle</keyword>
<keyword id="KW-0221">Differentiation</keyword>
<keyword id="KW-0282">Flagellum</keyword>
<keyword id="KW-0342">GTP-binding</keyword>
<keyword id="KW-0547">Nucleotide-binding</keyword>
<keyword id="KW-0597">Phosphoprotein</keyword>
<keyword id="KW-1185">Reference proteome</keyword>
<keyword id="KW-0744">Spermatogenesis</keyword>
<keyword id="KW-0770">Synapse</keyword>
<keyword id="KW-0832">Ubl conjugation</keyword>
<feature type="chain" id="PRO_0000230299" description="Septin-4">
    <location>
        <begin position="1"/>
        <end position="478"/>
    </location>
</feature>
<feature type="domain" description="Septin-type G" evidence="5">
    <location>
        <begin position="141"/>
        <end position="414"/>
    </location>
</feature>
<feature type="region of interest" description="Disordered" evidence="6">
    <location>
        <begin position="38"/>
        <end position="115"/>
    </location>
</feature>
<feature type="region of interest" description="G1 motif" evidence="5">
    <location>
        <begin position="151"/>
        <end position="158"/>
    </location>
</feature>
<feature type="region of interest" description="G3 motif" evidence="5">
    <location>
        <begin position="208"/>
        <end position="211"/>
    </location>
</feature>
<feature type="region of interest" description="G4 motif" evidence="5">
    <location>
        <begin position="289"/>
        <end position="292"/>
    </location>
</feature>
<feature type="region of interest" description="Disordered" evidence="6">
    <location>
        <begin position="425"/>
        <end position="448"/>
    </location>
</feature>
<feature type="coiled-coil region" evidence="4">
    <location>
        <begin position="446"/>
        <end position="478"/>
    </location>
</feature>
<feature type="compositionally biased region" description="Low complexity" evidence="6">
    <location>
        <begin position="95"/>
        <end position="108"/>
    </location>
</feature>
<feature type="binding site" evidence="3">
    <location>
        <begin position="151"/>
        <end position="158"/>
    </location>
    <ligand>
        <name>GTP</name>
        <dbReference type="ChEBI" id="CHEBI:37565"/>
    </ligand>
</feature>
<feature type="binding site" evidence="3">
    <location>
        <position position="185"/>
    </location>
    <ligand>
        <name>GTP</name>
        <dbReference type="ChEBI" id="CHEBI:37565"/>
    </ligand>
</feature>
<feature type="binding site" evidence="3">
    <location>
        <begin position="290"/>
        <end position="298"/>
    </location>
    <ligand>
        <name>GTP</name>
        <dbReference type="ChEBI" id="CHEBI:37565"/>
    </ligand>
</feature>
<feature type="binding site" evidence="3">
    <location>
        <position position="348"/>
    </location>
    <ligand>
        <name>GTP</name>
        <dbReference type="ChEBI" id="CHEBI:37565"/>
    </ligand>
</feature>
<feature type="binding site" evidence="3">
    <location>
        <position position="363"/>
    </location>
    <ligand>
        <name>GTP</name>
        <dbReference type="ChEBI" id="CHEBI:37565"/>
    </ligand>
</feature>
<feature type="modified residue" description="Phosphoserine" evidence="1">
    <location>
        <position position="117"/>
    </location>
</feature>
<feature type="modified residue" description="Phosphoserine" evidence="1">
    <location>
        <position position="118"/>
    </location>
</feature>
<feature type="modified residue" description="Phosphoserine" evidence="1">
    <location>
        <position position="325"/>
    </location>
</feature>
<feature type="modified residue" description="Phosphoserine" evidence="2">
    <location>
        <position position="432"/>
    </location>
</feature>
<feature type="modified residue" description="Phosphothreonine" evidence="2">
    <location>
        <position position="434"/>
    </location>
</feature>
<evidence type="ECO:0000250" key="1">
    <source>
        <dbReference type="UniProtKB" id="O43236"/>
    </source>
</evidence>
<evidence type="ECO:0000250" key="2">
    <source>
        <dbReference type="UniProtKB" id="P28661"/>
    </source>
</evidence>
<evidence type="ECO:0000250" key="3">
    <source>
        <dbReference type="UniProtKB" id="Q9UH03"/>
    </source>
</evidence>
<evidence type="ECO:0000255" key="4"/>
<evidence type="ECO:0000255" key="5">
    <source>
        <dbReference type="PROSITE-ProRule" id="PRU01056"/>
    </source>
</evidence>
<evidence type="ECO:0000256" key="6">
    <source>
        <dbReference type="SAM" id="MobiDB-lite"/>
    </source>
</evidence>
<evidence type="ECO:0000305" key="7"/>
<protein>
    <recommendedName>
        <fullName>Septin-4</fullName>
    </recommendedName>
</protein>
<dbReference type="EMBL" id="CR860418">
    <property type="protein sequence ID" value="CAH92543.1"/>
    <property type="molecule type" value="mRNA"/>
</dbReference>
<dbReference type="RefSeq" id="NP_001126242.1">
    <property type="nucleotide sequence ID" value="NM_001132770.1"/>
</dbReference>
<dbReference type="SMR" id="Q5R6R7"/>
<dbReference type="FunCoup" id="Q5R6R7">
    <property type="interactions" value="342"/>
</dbReference>
<dbReference type="STRING" id="9601.ENSPPYP00000009247"/>
<dbReference type="GeneID" id="100173213"/>
<dbReference type="KEGG" id="pon:100173213"/>
<dbReference type="CTD" id="5414"/>
<dbReference type="eggNOG" id="KOG2655">
    <property type="taxonomic scope" value="Eukaryota"/>
</dbReference>
<dbReference type="InParanoid" id="Q5R6R7"/>
<dbReference type="OrthoDB" id="416553at2759"/>
<dbReference type="Proteomes" id="UP000001595">
    <property type="component" value="Unplaced"/>
</dbReference>
<dbReference type="GO" id="GO:0030424">
    <property type="term" value="C:axon"/>
    <property type="evidence" value="ECO:0000250"/>
    <property type="project" value="UniProtKB"/>
</dbReference>
<dbReference type="GO" id="GO:0005737">
    <property type="term" value="C:cytoplasm"/>
    <property type="evidence" value="ECO:0000250"/>
    <property type="project" value="UniProtKB"/>
</dbReference>
<dbReference type="GO" id="GO:0030425">
    <property type="term" value="C:dendrite"/>
    <property type="evidence" value="ECO:0000250"/>
    <property type="project" value="UniProtKB"/>
</dbReference>
<dbReference type="GO" id="GO:0043204">
    <property type="term" value="C:perikaryon"/>
    <property type="evidence" value="ECO:0000250"/>
    <property type="project" value="UniProtKB"/>
</dbReference>
<dbReference type="GO" id="GO:0031105">
    <property type="term" value="C:septin complex"/>
    <property type="evidence" value="ECO:0000250"/>
    <property type="project" value="UniProtKB"/>
</dbReference>
<dbReference type="GO" id="GO:0097227">
    <property type="term" value="C:sperm annulus"/>
    <property type="evidence" value="ECO:0000250"/>
    <property type="project" value="UniProtKB"/>
</dbReference>
<dbReference type="GO" id="GO:0045202">
    <property type="term" value="C:synapse"/>
    <property type="evidence" value="ECO:0007669"/>
    <property type="project" value="UniProtKB-SubCell"/>
</dbReference>
<dbReference type="GO" id="GO:0030133">
    <property type="term" value="C:transport vesicle"/>
    <property type="evidence" value="ECO:0007669"/>
    <property type="project" value="UniProtKB-SubCell"/>
</dbReference>
<dbReference type="GO" id="GO:0005525">
    <property type="term" value="F:GTP binding"/>
    <property type="evidence" value="ECO:0007669"/>
    <property type="project" value="UniProtKB-KW"/>
</dbReference>
<dbReference type="GO" id="GO:0051301">
    <property type="term" value="P:cell division"/>
    <property type="evidence" value="ECO:0007669"/>
    <property type="project" value="UniProtKB-KW"/>
</dbReference>
<dbReference type="GO" id="GO:0030317">
    <property type="term" value="P:flagellated sperm motility"/>
    <property type="evidence" value="ECO:0000250"/>
    <property type="project" value="UniProtKB"/>
</dbReference>
<dbReference type="GO" id="GO:0061484">
    <property type="term" value="P:hematopoietic stem cell homeostasis"/>
    <property type="evidence" value="ECO:0000250"/>
    <property type="project" value="UniProtKB"/>
</dbReference>
<dbReference type="GO" id="GO:0001764">
    <property type="term" value="P:neuron migration"/>
    <property type="evidence" value="ECO:0000250"/>
    <property type="project" value="UniProtKB"/>
</dbReference>
<dbReference type="GO" id="GO:0048515">
    <property type="term" value="P:spermatid differentiation"/>
    <property type="evidence" value="ECO:0000250"/>
    <property type="project" value="UniProtKB"/>
</dbReference>
<dbReference type="CDD" id="cd01850">
    <property type="entry name" value="CDC_Septin"/>
    <property type="match status" value="1"/>
</dbReference>
<dbReference type="FunFam" id="3.40.50.300:FF:000064">
    <property type="entry name" value="Septin 4"/>
    <property type="match status" value="1"/>
</dbReference>
<dbReference type="Gene3D" id="3.40.50.300">
    <property type="entry name" value="P-loop containing nucleotide triphosphate hydrolases"/>
    <property type="match status" value="1"/>
</dbReference>
<dbReference type="InterPro" id="IPR030379">
    <property type="entry name" value="G_SEPTIN_dom"/>
</dbReference>
<dbReference type="InterPro" id="IPR027417">
    <property type="entry name" value="P-loop_NTPase"/>
</dbReference>
<dbReference type="InterPro" id="IPR016491">
    <property type="entry name" value="Septin"/>
</dbReference>
<dbReference type="PANTHER" id="PTHR18884">
    <property type="entry name" value="SEPTIN"/>
    <property type="match status" value="1"/>
</dbReference>
<dbReference type="Pfam" id="PF00735">
    <property type="entry name" value="Septin"/>
    <property type="match status" value="1"/>
</dbReference>
<dbReference type="SUPFAM" id="SSF52540">
    <property type="entry name" value="P-loop containing nucleoside triphosphate hydrolases"/>
    <property type="match status" value="1"/>
</dbReference>
<dbReference type="PROSITE" id="PS51719">
    <property type="entry name" value="G_SEPTIN"/>
    <property type="match status" value="1"/>
</dbReference>
<comment type="function">
    <text evidence="2 7">Filament-forming cytoskeletal GTPase (Probable). Pro-apoptotic protein involved in LGR5-positive intestinal stem cell and Paneth cell expansion in the intestines, via its interaction with XIAP (By similarity). May also play a role in the regulation of cell fate in the intestine (By similarity). Positive regulator of apoptosis involved in hematopoietic stem cell homeostasis; via its interaction with XIAP (By similarity). Negative regulator of repair and hair follicle regeneration in response to injury, due to inhibition of hair follicle stem cell proliferation, potentially via its interaction with XIAP (By similarity). Plays an important role in male fertility and sperm motility (By similarity). During spermiogenesis, essential for the establishment of the annulus (a fibrous ring structure connecting the midpiece and the principal piece of the sperm flagellum) which is a requisite for the structural and mechanical integrity of the sperm (By similarity). Involved in the migration of cortical neurons and the formation of neuron leading processes during embryonic development (By similarity). Required for dopaminergic metabolism in presynaptic autoreceptors; potentially via activity as a presynaptic scaffold protein (By similarity).</text>
</comment>
<comment type="subunit">
    <text evidence="1 2">Septins polymerize into heterooligomeric protein complexes that form filaments, and can associate with cellular membranes, actin filaments and microtubules. GTPase activity is required for filament formation. Interacts with SEPTIN8 (By similarity). Component of a septin core octameric complex consisting of SEPTIN12, SEPTIN7, SEPTIN6 and SEPTIN2 or SEPTIN4 in the order 12-7-6-2-2-6-7-12 or 12-7-6-4-4-6-7-12 (By similarity). Interacts with SEPTIN14 (via C-terminus) (By similarity). Interacts with DYRK1A (By similarity). Interacts with SLC6A3/DAT and SNCA/alpha-synuclein (By similarity). Interacts with STX1A; in the striatum (By similarity). Interacts with XIAP (via BIR3 domain) following the induction of apoptosis (By similarity). Interacts with AREL1 (via HECT domain); in the cytoplasm following induction of apoptosis (By similarity).</text>
</comment>
<comment type="subcellular location">
    <subcellularLocation>
        <location evidence="2">Cytoplasm</location>
    </subcellularLocation>
    <subcellularLocation>
        <location evidence="1">Cell projection</location>
        <location evidence="1">Cilium</location>
        <location evidence="1">Flagellum</location>
    </subcellularLocation>
    <subcellularLocation>
        <location evidence="1">Cytoplasmic vesicle</location>
        <location evidence="1">Secretory vesicle</location>
    </subcellularLocation>
    <subcellularLocation>
        <location evidence="2">Cell projection</location>
        <location evidence="2">Axon</location>
    </subcellularLocation>
    <subcellularLocation>
        <location evidence="2">Cell projection</location>
        <location evidence="2">Dendrite</location>
    </subcellularLocation>
    <subcellularLocation>
        <location evidence="2">Perikaryon</location>
    </subcellularLocation>
    <subcellularLocation>
        <location evidence="1">Synapse</location>
    </subcellularLocation>
    <text evidence="1 2">In platelets, found in areas surrounding alpha-granules (By similarity). Found in the sperm annulus, a fibrous ring structure connecting the midpiece and the principal piece of the sperm flagellum (By similarity). Expressed and colocalized with SLC6A3 and SNCA in axon terminals, especially at the varicosities (By similarity).</text>
</comment>
<comment type="PTM">
    <text evidence="1">Ubiquitinated by AREL1.</text>
</comment>
<comment type="PTM">
    <text evidence="2">Phosphorylated by DYRK1A.</text>
</comment>
<comment type="similarity">
    <text evidence="5">Belongs to the TRAFAC class TrmE-Era-EngA-EngB-Septin-like GTPase superfamily. Septin GTPase family.</text>
</comment>
<accession>Q5R6R7</accession>
<organism>
    <name type="scientific">Pongo abelii</name>
    <name type="common">Sumatran orangutan</name>
    <name type="synonym">Pongo pygmaeus abelii</name>
    <dbReference type="NCBI Taxonomy" id="9601"/>
    <lineage>
        <taxon>Eukaryota</taxon>
        <taxon>Metazoa</taxon>
        <taxon>Chordata</taxon>
        <taxon>Craniata</taxon>
        <taxon>Vertebrata</taxon>
        <taxon>Euteleostomi</taxon>
        <taxon>Mammalia</taxon>
        <taxon>Eutheria</taxon>
        <taxon>Euarchontoglires</taxon>
        <taxon>Primates</taxon>
        <taxon>Haplorrhini</taxon>
        <taxon>Catarrhini</taxon>
        <taxon>Hominidae</taxon>
        <taxon>Pongo</taxon>
    </lineage>
</organism>
<reference key="1">
    <citation type="submission" date="2004-11" db="EMBL/GenBank/DDBJ databases">
        <authorList>
            <consortium name="The German cDNA consortium"/>
        </authorList>
    </citation>
    <scope>NUCLEOTIDE SEQUENCE [LARGE SCALE MRNA]</scope>
    <source>
        <tissue>Brain cortex</tissue>
    </source>
</reference>
<name>SEPT4_PONAB</name>
<proteinExistence type="evidence at transcript level"/>